<protein>
    <recommendedName>
        <fullName>Putative RNA-binding protein Alsin2</fullName>
    </recommendedName>
</protein>
<evidence type="ECO:0000250" key="1">
    <source>
        <dbReference type="UniProtKB" id="Q9NQ29"/>
    </source>
</evidence>
<evidence type="ECO:0000255" key="2"/>
<evidence type="ECO:0000256" key="3">
    <source>
        <dbReference type="SAM" id="MobiDB-lite"/>
    </source>
</evidence>
<evidence type="ECO:0000269" key="4">
    <source>
    </source>
</evidence>
<evidence type="ECO:0000305" key="5"/>
<evidence type="ECO:0000312" key="6">
    <source>
        <dbReference type="EMBL" id="AAF49330.1"/>
    </source>
</evidence>
<evidence type="ECO:0000312" key="7">
    <source>
        <dbReference type="EMBL" id="AAX33565.1"/>
    </source>
</evidence>
<evidence type="ECO:0000312" key="8">
    <source>
        <dbReference type="EMBL" id="AGB94682.1"/>
    </source>
</evidence>
<evidence type="ECO:0000312" key="9">
    <source>
        <dbReference type="FlyBase" id="FBgn0036734"/>
    </source>
</evidence>
<evidence type="ECO:0000312" key="10">
    <source>
        <dbReference type="Proteomes" id="UP000000803"/>
    </source>
</evidence>
<reference evidence="10" key="1">
    <citation type="journal article" date="2000" name="Science">
        <title>The genome sequence of Drosophila melanogaster.</title>
        <authorList>
            <person name="Adams M.D."/>
            <person name="Celniker S.E."/>
            <person name="Holt R.A."/>
            <person name="Evans C.A."/>
            <person name="Gocayne J.D."/>
            <person name="Amanatides P.G."/>
            <person name="Scherer S.E."/>
            <person name="Li P.W."/>
            <person name="Hoskins R.A."/>
            <person name="Galle R.F."/>
            <person name="George R.A."/>
            <person name="Lewis S.E."/>
            <person name="Richards S."/>
            <person name="Ashburner M."/>
            <person name="Henderson S.N."/>
            <person name="Sutton G.G."/>
            <person name="Wortman J.R."/>
            <person name="Yandell M.D."/>
            <person name="Zhang Q."/>
            <person name="Chen L.X."/>
            <person name="Brandon R.C."/>
            <person name="Rogers Y.-H.C."/>
            <person name="Blazej R.G."/>
            <person name="Champe M."/>
            <person name="Pfeiffer B.D."/>
            <person name="Wan K.H."/>
            <person name="Doyle C."/>
            <person name="Baxter E.G."/>
            <person name="Helt G."/>
            <person name="Nelson C.R."/>
            <person name="Miklos G.L.G."/>
            <person name="Abril J.F."/>
            <person name="Agbayani A."/>
            <person name="An H.-J."/>
            <person name="Andrews-Pfannkoch C."/>
            <person name="Baldwin D."/>
            <person name="Ballew R.M."/>
            <person name="Basu A."/>
            <person name="Baxendale J."/>
            <person name="Bayraktaroglu L."/>
            <person name="Beasley E.M."/>
            <person name="Beeson K.Y."/>
            <person name="Benos P.V."/>
            <person name="Berman B.P."/>
            <person name="Bhandari D."/>
            <person name="Bolshakov S."/>
            <person name="Borkova D."/>
            <person name="Botchan M.R."/>
            <person name="Bouck J."/>
            <person name="Brokstein P."/>
            <person name="Brottier P."/>
            <person name="Burtis K.C."/>
            <person name="Busam D.A."/>
            <person name="Butler H."/>
            <person name="Cadieu E."/>
            <person name="Center A."/>
            <person name="Chandra I."/>
            <person name="Cherry J.M."/>
            <person name="Cawley S."/>
            <person name="Dahlke C."/>
            <person name="Davenport L.B."/>
            <person name="Davies P."/>
            <person name="de Pablos B."/>
            <person name="Delcher A."/>
            <person name="Deng Z."/>
            <person name="Mays A.D."/>
            <person name="Dew I."/>
            <person name="Dietz S.M."/>
            <person name="Dodson K."/>
            <person name="Doup L.E."/>
            <person name="Downes M."/>
            <person name="Dugan-Rocha S."/>
            <person name="Dunkov B.C."/>
            <person name="Dunn P."/>
            <person name="Durbin K.J."/>
            <person name="Evangelista C.C."/>
            <person name="Ferraz C."/>
            <person name="Ferriera S."/>
            <person name="Fleischmann W."/>
            <person name="Fosler C."/>
            <person name="Gabrielian A.E."/>
            <person name="Garg N.S."/>
            <person name="Gelbart W.M."/>
            <person name="Glasser K."/>
            <person name="Glodek A."/>
            <person name="Gong F."/>
            <person name="Gorrell J.H."/>
            <person name="Gu Z."/>
            <person name="Guan P."/>
            <person name="Harris M."/>
            <person name="Harris N.L."/>
            <person name="Harvey D.A."/>
            <person name="Heiman T.J."/>
            <person name="Hernandez J.R."/>
            <person name="Houck J."/>
            <person name="Hostin D."/>
            <person name="Houston K.A."/>
            <person name="Howland T.J."/>
            <person name="Wei M.-H."/>
            <person name="Ibegwam C."/>
            <person name="Jalali M."/>
            <person name="Kalush F."/>
            <person name="Karpen G.H."/>
            <person name="Ke Z."/>
            <person name="Kennison J.A."/>
            <person name="Ketchum K.A."/>
            <person name="Kimmel B.E."/>
            <person name="Kodira C.D."/>
            <person name="Kraft C.L."/>
            <person name="Kravitz S."/>
            <person name="Kulp D."/>
            <person name="Lai Z."/>
            <person name="Lasko P."/>
            <person name="Lei Y."/>
            <person name="Levitsky A.A."/>
            <person name="Li J.H."/>
            <person name="Li Z."/>
            <person name="Liang Y."/>
            <person name="Lin X."/>
            <person name="Liu X."/>
            <person name="Mattei B."/>
            <person name="McIntosh T.C."/>
            <person name="McLeod M.P."/>
            <person name="McPherson D."/>
            <person name="Merkulov G."/>
            <person name="Milshina N.V."/>
            <person name="Mobarry C."/>
            <person name="Morris J."/>
            <person name="Moshrefi A."/>
            <person name="Mount S.M."/>
            <person name="Moy M."/>
            <person name="Murphy B."/>
            <person name="Murphy L."/>
            <person name="Muzny D.M."/>
            <person name="Nelson D.L."/>
            <person name="Nelson D.R."/>
            <person name="Nelson K.A."/>
            <person name="Nixon K."/>
            <person name="Nusskern D.R."/>
            <person name="Pacleb J.M."/>
            <person name="Palazzolo M."/>
            <person name="Pittman G.S."/>
            <person name="Pan S."/>
            <person name="Pollard J."/>
            <person name="Puri V."/>
            <person name="Reese M.G."/>
            <person name="Reinert K."/>
            <person name="Remington K."/>
            <person name="Saunders R.D.C."/>
            <person name="Scheeler F."/>
            <person name="Shen H."/>
            <person name="Shue B.C."/>
            <person name="Siden-Kiamos I."/>
            <person name="Simpson M."/>
            <person name="Skupski M.P."/>
            <person name="Smith T.J."/>
            <person name="Spier E."/>
            <person name="Spradling A.C."/>
            <person name="Stapleton M."/>
            <person name="Strong R."/>
            <person name="Sun E."/>
            <person name="Svirskas R."/>
            <person name="Tector C."/>
            <person name="Turner R."/>
            <person name="Venter E."/>
            <person name="Wang A.H."/>
            <person name="Wang X."/>
            <person name="Wang Z.-Y."/>
            <person name="Wassarman D.A."/>
            <person name="Weinstock G.M."/>
            <person name="Weissenbach J."/>
            <person name="Williams S.M."/>
            <person name="Woodage T."/>
            <person name="Worley K.C."/>
            <person name="Wu D."/>
            <person name="Yang S."/>
            <person name="Yao Q.A."/>
            <person name="Ye J."/>
            <person name="Yeh R.-F."/>
            <person name="Zaveri J.S."/>
            <person name="Zhan M."/>
            <person name="Zhang G."/>
            <person name="Zhao Q."/>
            <person name="Zheng L."/>
            <person name="Zheng X.H."/>
            <person name="Zhong F.N."/>
            <person name="Zhong W."/>
            <person name="Zhou X."/>
            <person name="Zhu S.C."/>
            <person name="Zhu X."/>
            <person name="Smith H.O."/>
            <person name="Gibbs R.A."/>
            <person name="Myers E.W."/>
            <person name="Rubin G.M."/>
            <person name="Venter J.C."/>
        </authorList>
    </citation>
    <scope>NUCLEOTIDE SEQUENCE [LARGE SCALE GENOMIC DNA]</scope>
    <source>
        <strain evidence="10">Berkeley</strain>
    </source>
</reference>
<reference evidence="10" key="2">
    <citation type="journal article" date="2002" name="Genome Biol.">
        <title>Annotation of the Drosophila melanogaster euchromatic genome: a systematic review.</title>
        <authorList>
            <person name="Misra S."/>
            <person name="Crosby M.A."/>
            <person name="Mungall C.J."/>
            <person name="Matthews B.B."/>
            <person name="Campbell K.S."/>
            <person name="Hradecky P."/>
            <person name="Huang Y."/>
            <person name="Kaminker J.S."/>
            <person name="Millburn G.H."/>
            <person name="Prochnik S.E."/>
            <person name="Smith C.D."/>
            <person name="Tupy J.L."/>
            <person name="Whitfield E.J."/>
            <person name="Bayraktaroglu L."/>
            <person name="Berman B.P."/>
            <person name="Bettencourt B.R."/>
            <person name="Celniker S.E."/>
            <person name="de Grey A.D.N.J."/>
            <person name="Drysdale R.A."/>
            <person name="Harris N.L."/>
            <person name="Richter J."/>
            <person name="Russo S."/>
            <person name="Schroeder A.J."/>
            <person name="Shu S.Q."/>
            <person name="Stapleton M."/>
            <person name="Yamada C."/>
            <person name="Ashburner M."/>
            <person name="Gelbart W.M."/>
            <person name="Rubin G.M."/>
            <person name="Lewis S.E."/>
        </authorList>
    </citation>
    <scope>GENOME REANNOTATION</scope>
    <source>
        <strain evidence="10">Berkeley</strain>
    </source>
</reference>
<reference evidence="7" key="3">
    <citation type="submission" date="2005-03" db="EMBL/GenBank/DDBJ databases">
        <authorList>
            <person name="Stapleton M."/>
            <person name="Carlson J."/>
            <person name="Chavez C."/>
            <person name="Frise E."/>
            <person name="George R."/>
            <person name="Pacleb J."/>
            <person name="Park S."/>
            <person name="Wan K."/>
            <person name="Yu C."/>
            <person name="Rubin G.M."/>
            <person name="Celniker S."/>
        </authorList>
    </citation>
    <scope>NUCLEOTIDE SEQUENCE [LARGE SCALE MRNA]</scope>
    <source>
        <strain evidence="7">Berkeley</strain>
        <tissue evidence="7">Embryo</tissue>
    </source>
</reference>
<reference evidence="5" key="4">
    <citation type="journal article" date="2008" name="Mol. Cell. Biochem.">
        <title>DX16 is a novel SR protein phosphorylated by DOA.</title>
        <authorList>
            <person name="Wan Y."/>
            <person name="Sun M."/>
            <person name="Wang S."/>
            <person name="Liu L."/>
            <person name="Yuan L."/>
            <person name="Xie W."/>
        </authorList>
    </citation>
    <scope>INTERACTION WITH X16</scope>
</reference>
<feature type="chain" id="PRO_0000460192" description="Putative RNA-binding protein Alsin2">
    <location>
        <begin position="1"/>
        <end position="420"/>
    </location>
</feature>
<feature type="region of interest" description="Disordered" evidence="3">
    <location>
        <begin position="242"/>
        <end position="420"/>
    </location>
</feature>
<feature type="coiled-coil region" evidence="2">
    <location>
        <begin position="99"/>
        <end position="130"/>
    </location>
</feature>
<feature type="compositionally biased region" description="Basic and acidic residues" evidence="3">
    <location>
        <begin position="242"/>
        <end position="259"/>
    </location>
</feature>
<feature type="compositionally biased region" description="Basic and acidic residues" evidence="3">
    <location>
        <begin position="282"/>
        <end position="363"/>
    </location>
</feature>
<feature type="compositionally biased region" description="Basic and acidic residues" evidence="3">
    <location>
        <begin position="373"/>
        <end position="399"/>
    </location>
</feature>
<gene>
    <name evidence="6" type="primary">Alsin2</name>
    <name evidence="8 9" type="ORF">CG7564</name>
</gene>
<dbReference type="EMBL" id="AE014296">
    <property type="protein sequence ID" value="AAF49330.1"/>
    <property type="molecule type" value="Genomic_DNA"/>
</dbReference>
<dbReference type="EMBL" id="AE014296">
    <property type="protein sequence ID" value="AGB94682.1"/>
    <property type="molecule type" value="Genomic_DNA"/>
</dbReference>
<dbReference type="EMBL" id="AE014296">
    <property type="protein sequence ID" value="AHN58122.1"/>
    <property type="molecule type" value="Genomic_DNA"/>
</dbReference>
<dbReference type="EMBL" id="AE014296">
    <property type="protein sequence ID" value="AHN58123.1"/>
    <property type="molecule type" value="Genomic_DNA"/>
</dbReference>
<dbReference type="EMBL" id="BT021417">
    <property type="protein sequence ID" value="AAX33565.1"/>
    <property type="molecule type" value="mRNA"/>
</dbReference>
<dbReference type="RefSeq" id="NP_001261989.1">
    <property type="nucleotide sequence ID" value="NM_001275060.1"/>
</dbReference>
<dbReference type="RefSeq" id="NP_001287097.1">
    <property type="nucleotide sequence ID" value="NM_001300168.1"/>
</dbReference>
<dbReference type="RefSeq" id="NP_001287098.1">
    <property type="nucleotide sequence ID" value="NM_001300169.1"/>
</dbReference>
<dbReference type="RefSeq" id="NP_648991.1">
    <property type="nucleotide sequence ID" value="NM_140734.3"/>
</dbReference>
<dbReference type="SMR" id="Q9VVI1"/>
<dbReference type="DIP" id="DIP-17657N"/>
<dbReference type="FunCoup" id="Q9VVI1">
    <property type="interactions" value="1839"/>
</dbReference>
<dbReference type="IntAct" id="Q9VVI1">
    <property type="interactions" value="29"/>
</dbReference>
<dbReference type="STRING" id="7227.FBpp0311537"/>
<dbReference type="PaxDb" id="7227-FBpp0304226"/>
<dbReference type="DNASU" id="39956"/>
<dbReference type="EnsemblMetazoa" id="FBtr0075175">
    <property type="protein sequence ID" value="FBpp0074941"/>
    <property type="gene ID" value="FBgn0036734"/>
</dbReference>
<dbReference type="EnsemblMetazoa" id="FBtr0331842">
    <property type="protein sequence ID" value="FBpp0304226"/>
    <property type="gene ID" value="FBgn0036734"/>
</dbReference>
<dbReference type="EnsemblMetazoa" id="FBtr0344941">
    <property type="protein sequence ID" value="FBpp0311214"/>
    <property type="gene ID" value="FBgn0036734"/>
</dbReference>
<dbReference type="EnsemblMetazoa" id="FBtr0345387">
    <property type="protein sequence ID" value="FBpp0311537"/>
    <property type="gene ID" value="FBgn0036734"/>
</dbReference>
<dbReference type="GeneID" id="39956"/>
<dbReference type="KEGG" id="dme:Dmel_CG7564"/>
<dbReference type="UCSC" id="CG7564-RA">
    <property type="organism name" value="d. melanogaster"/>
</dbReference>
<dbReference type="AGR" id="FB:FBgn0036734"/>
<dbReference type="FlyBase" id="FBgn0036734">
    <property type="gene designation" value="CG7564"/>
</dbReference>
<dbReference type="VEuPathDB" id="VectorBase:FBgn0036734"/>
<dbReference type="eggNOG" id="KOG0796">
    <property type="taxonomic scope" value="Eukaryota"/>
</dbReference>
<dbReference type="GeneTree" id="ENSGT00950000183213"/>
<dbReference type="HOGENOM" id="CLU_030397_3_1_1"/>
<dbReference type="InParanoid" id="Q9VVI1"/>
<dbReference type="OMA" id="CPHELFP"/>
<dbReference type="OrthoDB" id="153872at2759"/>
<dbReference type="BioGRID-ORCS" id="39956">
    <property type="hits" value="2 hits in 3 CRISPR screens"/>
</dbReference>
<dbReference type="GenomeRNAi" id="39956"/>
<dbReference type="Proteomes" id="UP000000803">
    <property type="component" value="Chromosome 3L"/>
</dbReference>
<dbReference type="Bgee" id="FBgn0036734">
    <property type="expression patterns" value="Expressed in ovarian sheath cell (Drosophila) in ovary and 268 other cell types or tissues"/>
</dbReference>
<dbReference type="GO" id="GO:0071011">
    <property type="term" value="C:precatalytic spliceosome"/>
    <property type="evidence" value="ECO:0007005"/>
    <property type="project" value="FlyBase"/>
</dbReference>
<dbReference type="GO" id="GO:0005685">
    <property type="term" value="C:U1 snRNP"/>
    <property type="evidence" value="ECO:0000250"/>
    <property type="project" value="FlyBase"/>
</dbReference>
<dbReference type="GO" id="GO:0071004">
    <property type="term" value="C:U2-type prespliceosome"/>
    <property type="evidence" value="ECO:0000318"/>
    <property type="project" value="GO_Central"/>
</dbReference>
<dbReference type="GO" id="GO:0003729">
    <property type="term" value="F:mRNA binding"/>
    <property type="evidence" value="ECO:0000318"/>
    <property type="project" value="GO_Central"/>
</dbReference>
<dbReference type="GO" id="GO:0006376">
    <property type="term" value="P:mRNA splice site recognition"/>
    <property type="evidence" value="ECO:0000318"/>
    <property type="project" value="GO_Central"/>
</dbReference>
<dbReference type="GO" id="GO:0000398">
    <property type="term" value="P:mRNA splicing, via spliceosome"/>
    <property type="evidence" value="ECO:0000250"/>
    <property type="project" value="FlyBase"/>
</dbReference>
<dbReference type="InterPro" id="IPR004882">
    <property type="entry name" value="Luc7-rel"/>
</dbReference>
<dbReference type="PANTHER" id="PTHR12375">
    <property type="entry name" value="RNA-BINDING PROTEIN LUC7-RELATED"/>
    <property type="match status" value="1"/>
</dbReference>
<dbReference type="Pfam" id="PF03194">
    <property type="entry name" value="LUC7"/>
    <property type="match status" value="1"/>
</dbReference>
<comment type="function">
    <text evidence="1">May bind to RNA via its Arg/Ser-rich domain.</text>
</comment>
<comment type="subunit">
    <text evidence="4">Interacts with x16 (via Arg/Ser-rich region).</text>
</comment>
<comment type="similarity">
    <text evidence="5">Belongs to the Luc7 family.</text>
</comment>
<accession>Q9VVI1</accession>
<organism evidence="10">
    <name type="scientific">Drosophila melanogaster</name>
    <name type="common">Fruit fly</name>
    <dbReference type="NCBI Taxonomy" id="7227"/>
    <lineage>
        <taxon>Eukaryota</taxon>
        <taxon>Metazoa</taxon>
        <taxon>Ecdysozoa</taxon>
        <taxon>Arthropoda</taxon>
        <taxon>Hexapoda</taxon>
        <taxon>Insecta</taxon>
        <taxon>Pterygota</taxon>
        <taxon>Neoptera</taxon>
        <taxon>Endopterygota</taxon>
        <taxon>Diptera</taxon>
        <taxon>Brachycera</taxon>
        <taxon>Muscomorpha</taxon>
        <taxon>Ephydroidea</taxon>
        <taxon>Drosophilidae</taxon>
        <taxon>Drosophila</taxon>
        <taxon>Sophophora</taxon>
    </lineage>
</organism>
<keyword id="KW-0175">Coiled coil</keyword>
<keyword id="KW-1185">Reference proteome</keyword>
<sequence length="420" mass="48416">MSAPSNKMSATDQMRAMLDQLMGTTRNGDERQLKFSDPRVCKSFLLDCCPHDILASTRMDLGECPKVHDLAFRADYESAAKTRDYYYDIEAMEHLQAFIADCDRRTDSAKQRLKETQEELTAEVAEKANAVHGLAEEIGKKLAKAEALGEAGEVEDSMELMKEIEELRAKKIKAEHEYRTSMPASTYQQQKLRVCEVCSAYLGIHDNDIRLADHFGGKLHLGFLTIREKLIELEKTAAPRKAELKRTGKMTDREDEGRGRNRYFVGGRELDRRSRVHRSRSRERQRNRDGDRERPNNGRGPEEKGSERPKEAADGPERAERAPDRGGRRDDRDNHGRDHRERERDGRRDRDRHGRNDRGRFGDRGGGGGGGGHHRDDRRRSRSRERSPRERRNFNHFRDGGGGGNGQRKRSYSRERNYRR</sequence>
<name>LUC7L_DROME</name>
<proteinExistence type="evidence at protein level"/>